<feature type="chain" id="PRO_0000298271" description="Protein Syd">
    <location>
        <begin position="1"/>
        <end position="183"/>
    </location>
</feature>
<protein>
    <recommendedName>
        <fullName evidence="1">Protein Syd</fullName>
    </recommendedName>
</protein>
<sequence>MDLNISTALRSFTQRYIDLWQQQTGHLPASKELYGVPSPCIVETGEDQVFWQPQAFLPEATLTNIERALEIQLHPDIHDFYTQQYAGDMMADLGNHRFTLLQVWSEDDFIRLQENLIGHLVTQKRLKLSPTLFLATTSSEMTMASLCNVSGNVVLEQFGSDKRTLLASTLSHFLDALRPVLPE</sequence>
<dbReference type="EMBL" id="CP000305">
    <property type="protein sequence ID" value="ABG19294.1"/>
    <property type="molecule type" value="Genomic_DNA"/>
</dbReference>
<dbReference type="EMBL" id="ACNQ01000017">
    <property type="protein sequence ID" value="EEO75443.1"/>
    <property type="molecule type" value="Genomic_DNA"/>
</dbReference>
<dbReference type="RefSeq" id="WP_002212123.1">
    <property type="nucleotide sequence ID" value="NZ_ACNQ01000017.1"/>
</dbReference>
<dbReference type="SMR" id="Q1CFD6"/>
<dbReference type="GeneID" id="57977526"/>
<dbReference type="KEGG" id="ypn:YPN_2967"/>
<dbReference type="HOGENOM" id="CLU_121866_0_0_6"/>
<dbReference type="Proteomes" id="UP000008936">
    <property type="component" value="Chromosome"/>
</dbReference>
<dbReference type="GO" id="GO:0009898">
    <property type="term" value="C:cytoplasmic side of plasma membrane"/>
    <property type="evidence" value="ECO:0007669"/>
    <property type="project" value="InterPro"/>
</dbReference>
<dbReference type="CDD" id="cd16323">
    <property type="entry name" value="Syd"/>
    <property type="match status" value="1"/>
</dbReference>
<dbReference type="Gene3D" id="3.40.1580.20">
    <property type="entry name" value="Syd protein"/>
    <property type="match status" value="1"/>
</dbReference>
<dbReference type="HAMAP" id="MF_01104">
    <property type="entry name" value="Syd"/>
    <property type="match status" value="1"/>
</dbReference>
<dbReference type="InterPro" id="IPR009948">
    <property type="entry name" value="Syd"/>
</dbReference>
<dbReference type="InterPro" id="IPR038228">
    <property type="entry name" value="Syd_sf"/>
</dbReference>
<dbReference type="NCBIfam" id="NF003439">
    <property type="entry name" value="PRK04968.1"/>
    <property type="match status" value="1"/>
</dbReference>
<dbReference type="Pfam" id="PF07348">
    <property type="entry name" value="Syd"/>
    <property type="match status" value="1"/>
</dbReference>
<organism>
    <name type="scientific">Yersinia pestis bv. Antiqua (strain Nepal516)</name>
    <dbReference type="NCBI Taxonomy" id="377628"/>
    <lineage>
        <taxon>Bacteria</taxon>
        <taxon>Pseudomonadati</taxon>
        <taxon>Pseudomonadota</taxon>
        <taxon>Gammaproteobacteria</taxon>
        <taxon>Enterobacterales</taxon>
        <taxon>Yersiniaceae</taxon>
        <taxon>Yersinia</taxon>
    </lineage>
</organism>
<evidence type="ECO:0000255" key="1">
    <source>
        <dbReference type="HAMAP-Rule" id="MF_01104"/>
    </source>
</evidence>
<proteinExistence type="inferred from homology"/>
<comment type="function">
    <text evidence="1">Interacts with the SecY protein in vivo. May bind preferentially to an uncomplexed state of SecY, thus functioning either as a chelating agent for excess SecY in the cell or as a regulatory factor that negatively controls the translocase function.</text>
</comment>
<comment type="subcellular location">
    <subcellularLocation>
        <location evidence="1">Cell inner membrane</location>
        <topology evidence="1">Peripheral membrane protein</topology>
        <orientation evidence="1">Cytoplasmic side</orientation>
    </subcellularLocation>
    <text evidence="1">Loosely associated with the cytoplasmic side of the inner membrane, probably via SecY.</text>
</comment>
<comment type="similarity">
    <text evidence="1">Belongs to the Syd family.</text>
</comment>
<keyword id="KW-0997">Cell inner membrane</keyword>
<keyword id="KW-1003">Cell membrane</keyword>
<keyword id="KW-0472">Membrane</keyword>
<reference key="1">
    <citation type="journal article" date="2006" name="J. Bacteriol.">
        <title>Complete genome sequence of Yersinia pestis strains Antiqua and Nepal516: evidence of gene reduction in an emerging pathogen.</title>
        <authorList>
            <person name="Chain P.S.G."/>
            <person name="Hu P."/>
            <person name="Malfatti S.A."/>
            <person name="Radnedge L."/>
            <person name="Larimer F."/>
            <person name="Vergez L.M."/>
            <person name="Worsham P."/>
            <person name="Chu M.C."/>
            <person name="Andersen G.L."/>
        </authorList>
    </citation>
    <scope>NUCLEOTIDE SEQUENCE [LARGE SCALE GENOMIC DNA]</scope>
    <source>
        <strain>Nepal516</strain>
    </source>
</reference>
<reference key="2">
    <citation type="submission" date="2009-04" db="EMBL/GenBank/DDBJ databases">
        <title>Yersinia pestis Nepal516A whole genome shotgun sequencing project.</title>
        <authorList>
            <person name="Plunkett G. III"/>
            <person name="Anderson B.D."/>
            <person name="Baumler D.J."/>
            <person name="Burland V."/>
            <person name="Cabot E.L."/>
            <person name="Glasner J.D."/>
            <person name="Mau B."/>
            <person name="Neeno-Eckwall E."/>
            <person name="Perna N.T."/>
            <person name="Munk A.C."/>
            <person name="Tapia R."/>
            <person name="Green L.D."/>
            <person name="Rogers Y.C."/>
            <person name="Detter J.C."/>
            <person name="Bruce D.C."/>
            <person name="Brettin T.S."/>
        </authorList>
    </citation>
    <scope>NUCLEOTIDE SEQUENCE [LARGE SCALE GENOMIC DNA]</scope>
    <source>
        <strain>Nepal516</strain>
    </source>
</reference>
<accession>Q1CFD6</accession>
<accession>C4GWZ3</accession>
<gene>
    <name evidence="1" type="primary">syd</name>
    <name type="ordered locus">YPN_2967</name>
    <name type="ORF">YP516_3360</name>
</gene>
<name>SYDP_YERPN</name>